<reference key="1">
    <citation type="submission" date="2005-07" db="EMBL/GenBank/DDBJ databases">
        <title>Complete sequence of Synechococcus sp. CC9605.</title>
        <authorList>
            <consortium name="US DOE Joint Genome Institute"/>
            <person name="Copeland A."/>
            <person name="Lucas S."/>
            <person name="Lapidus A."/>
            <person name="Barry K."/>
            <person name="Detter J.C."/>
            <person name="Glavina T."/>
            <person name="Hammon N."/>
            <person name="Israni S."/>
            <person name="Pitluck S."/>
            <person name="Schmutz J."/>
            <person name="Martinez M."/>
            <person name="Larimer F."/>
            <person name="Land M."/>
            <person name="Kyrpides N."/>
            <person name="Ivanova N."/>
            <person name="Richardson P."/>
        </authorList>
    </citation>
    <scope>NUCLEOTIDE SEQUENCE [LARGE SCALE GENOMIC DNA]</scope>
    <source>
        <strain>CC9605</strain>
    </source>
</reference>
<gene>
    <name evidence="1" type="primary">chlN</name>
    <name type="ordered locus">Syncc9605_0747</name>
</gene>
<proteinExistence type="inferred from homology"/>
<sequence length="425" mass="46578">MAGPTLLKESGPREVFCGLTSIVWLHRRMPDAFFLVVGSRTCAHLIQSAAGVMIFAEPRFGTAILSERDLAGLADAHDELDRVCKELLQRRPEIRTLFLVGSCPSEVIKLDLARAAERLNEELSGQVRVVNYSGSGIETTFTQGEDGALAALVPLLPASDERQLLLVGTLADAVEDRQMHLFQRMGIETIRSLPPRQSTDLPAVGAGTTVLLTQPFLTETARLLGDRGARVLTAPFPLGAEGSRRWMEAAADAFHLPDERVAAVLDPLVERAQSALARHRAVLEGKRIFLLPESQLELPLARFLHRECGMQLVEVGTPYLNREQMAAELDLLPDDVPVMEGQHVEQQLDRVRASQPDLVVCGMGLANPLEAEGIATKWSIELVFSPIHGIDQAGDLAELFSRPLRRRQLIRPGLHPSSLDPTVHA</sequence>
<evidence type="ECO:0000255" key="1">
    <source>
        <dbReference type="HAMAP-Rule" id="MF_00352"/>
    </source>
</evidence>
<name>CHLN_SYNSC</name>
<feature type="chain" id="PRO_0000324027" description="Light-independent protochlorophyllide reductase subunit N">
    <location>
        <begin position="1"/>
        <end position="425"/>
    </location>
</feature>
<feature type="binding site" evidence="1">
    <location>
        <position position="17"/>
    </location>
    <ligand>
        <name>[4Fe-4S] cluster</name>
        <dbReference type="ChEBI" id="CHEBI:49883"/>
        <note>ligand shared with heterodimeric partner</note>
    </ligand>
</feature>
<feature type="binding site" evidence="1">
    <location>
        <position position="42"/>
    </location>
    <ligand>
        <name>[4Fe-4S] cluster</name>
        <dbReference type="ChEBI" id="CHEBI:49883"/>
        <note>ligand shared with heterodimeric partner</note>
    </ligand>
</feature>
<feature type="binding site" evidence="1">
    <location>
        <position position="103"/>
    </location>
    <ligand>
        <name>[4Fe-4S] cluster</name>
        <dbReference type="ChEBI" id="CHEBI:49883"/>
        <note>ligand shared with heterodimeric partner</note>
    </ligand>
</feature>
<accession>Q3ALL6</accession>
<dbReference type="EC" id="1.3.7.7" evidence="1"/>
<dbReference type="EMBL" id="CP000110">
    <property type="protein sequence ID" value="ABB34516.1"/>
    <property type="molecule type" value="Genomic_DNA"/>
</dbReference>
<dbReference type="RefSeq" id="WP_011363743.1">
    <property type="nucleotide sequence ID" value="NC_007516.1"/>
</dbReference>
<dbReference type="SMR" id="Q3ALL6"/>
<dbReference type="STRING" id="110662.Syncc9605_0747"/>
<dbReference type="KEGG" id="syd:Syncc9605_0747"/>
<dbReference type="eggNOG" id="COG2710">
    <property type="taxonomic scope" value="Bacteria"/>
</dbReference>
<dbReference type="HOGENOM" id="CLU_037170_0_0_3"/>
<dbReference type="OrthoDB" id="5714774at2"/>
<dbReference type="UniPathway" id="UPA00670"/>
<dbReference type="GO" id="GO:0051539">
    <property type="term" value="F:4 iron, 4 sulfur cluster binding"/>
    <property type="evidence" value="ECO:0007669"/>
    <property type="project" value="UniProtKB-UniRule"/>
</dbReference>
<dbReference type="GO" id="GO:0005524">
    <property type="term" value="F:ATP binding"/>
    <property type="evidence" value="ECO:0007669"/>
    <property type="project" value="UniProtKB-UniRule"/>
</dbReference>
<dbReference type="GO" id="GO:0046872">
    <property type="term" value="F:metal ion binding"/>
    <property type="evidence" value="ECO:0007669"/>
    <property type="project" value="UniProtKB-KW"/>
</dbReference>
<dbReference type="GO" id="GO:0016730">
    <property type="term" value="F:oxidoreductase activity, acting on iron-sulfur proteins as donors"/>
    <property type="evidence" value="ECO:0007669"/>
    <property type="project" value="InterPro"/>
</dbReference>
<dbReference type="GO" id="GO:0016636">
    <property type="term" value="F:oxidoreductase activity, acting on the CH-CH group of donors, iron-sulfur protein as acceptor"/>
    <property type="evidence" value="ECO:0007669"/>
    <property type="project" value="UniProtKB-UniRule"/>
</dbReference>
<dbReference type="GO" id="GO:0036068">
    <property type="term" value="P:light-independent chlorophyll biosynthetic process"/>
    <property type="evidence" value="ECO:0007669"/>
    <property type="project" value="UniProtKB-UniRule"/>
</dbReference>
<dbReference type="GO" id="GO:0019685">
    <property type="term" value="P:photosynthesis, dark reaction"/>
    <property type="evidence" value="ECO:0007669"/>
    <property type="project" value="InterPro"/>
</dbReference>
<dbReference type="Gene3D" id="3.40.50.1980">
    <property type="entry name" value="Nitrogenase molybdenum iron protein domain"/>
    <property type="match status" value="3"/>
</dbReference>
<dbReference type="HAMAP" id="MF_00352">
    <property type="entry name" value="ChlN_BchN"/>
    <property type="match status" value="1"/>
</dbReference>
<dbReference type="InterPro" id="IPR050293">
    <property type="entry name" value="LIPOR_BchN/ChlN"/>
</dbReference>
<dbReference type="InterPro" id="IPR000510">
    <property type="entry name" value="Nase/OxRdtase_comp1"/>
</dbReference>
<dbReference type="InterPro" id="IPR005970">
    <property type="entry name" value="Protochl_reductN"/>
</dbReference>
<dbReference type="NCBIfam" id="TIGR01279">
    <property type="entry name" value="DPOR_bchN"/>
    <property type="match status" value="1"/>
</dbReference>
<dbReference type="NCBIfam" id="NF002768">
    <property type="entry name" value="PRK02842.1"/>
    <property type="match status" value="1"/>
</dbReference>
<dbReference type="PANTHER" id="PTHR39429">
    <property type="entry name" value="LIGHT-INDEPENDENT PROTOCHLOROPHYLLIDE REDUCTASE SUBUNIT N"/>
    <property type="match status" value="1"/>
</dbReference>
<dbReference type="PANTHER" id="PTHR39429:SF3">
    <property type="entry name" value="LIGHT-INDEPENDENT PROTOCHLOROPHYLLIDE REDUCTASE SUBUNIT N"/>
    <property type="match status" value="1"/>
</dbReference>
<dbReference type="Pfam" id="PF00148">
    <property type="entry name" value="Oxidored_nitro"/>
    <property type="match status" value="1"/>
</dbReference>
<dbReference type="PIRSF" id="PIRSF000162">
    <property type="entry name" value="P_chlorophyll_rd"/>
    <property type="match status" value="1"/>
</dbReference>
<dbReference type="SUPFAM" id="SSF53807">
    <property type="entry name" value="Helical backbone' metal receptor"/>
    <property type="match status" value="1"/>
</dbReference>
<keyword id="KW-0004">4Fe-4S</keyword>
<keyword id="KW-0067">ATP-binding</keyword>
<keyword id="KW-0149">Chlorophyll biosynthesis</keyword>
<keyword id="KW-0408">Iron</keyword>
<keyword id="KW-0411">Iron-sulfur</keyword>
<keyword id="KW-0479">Metal-binding</keyword>
<keyword id="KW-0547">Nucleotide-binding</keyword>
<keyword id="KW-0560">Oxidoreductase</keyword>
<keyword id="KW-0602">Photosynthesis</keyword>
<comment type="function">
    <text evidence="1">Component of the dark-operative protochlorophyllide reductase (DPOR) that uses Mg-ATP and reduced ferredoxin to reduce ring D of protochlorophyllide (Pchlide) to form chlorophyllide a (Chlide). This reaction is light-independent. The NB-protein (ChlN-ChlB) is the catalytic component of the complex.</text>
</comment>
<comment type="catalytic activity">
    <reaction evidence="1">
        <text>chlorophyllide a + oxidized 2[4Fe-4S]-[ferredoxin] + 2 ADP + 2 phosphate = protochlorophyllide a + reduced 2[4Fe-4S]-[ferredoxin] + 2 ATP + 2 H2O</text>
        <dbReference type="Rhea" id="RHEA:28202"/>
        <dbReference type="Rhea" id="RHEA-COMP:10002"/>
        <dbReference type="Rhea" id="RHEA-COMP:10004"/>
        <dbReference type="ChEBI" id="CHEBI:15377"/>
        <dbReference type="ChEBI" id="CHEBI:30616"/>
        <dbReference type="ChEBI" id="CHEBI:33722"/>
        <dbReference type="ChEBI" id="CHEBI:33723"/>
        <dbReference type="ChEBI" id="CHEBI:43474"/>
        <dbReference type="ChEBI" id="CHEBI:83348"/>
        <dbReference type="ChEBI" id="CHEBI:83350"/>
        <dbReference type="ChEBI" id="CHEBI:456216"/>
        <dbReference type="EC" id="1.3.7.7"/>
    </reaction>
</comment>
<comment type="cofactor">
    <cofactor evidence="1">
        <name>[4Fe-4S] cluster</name>
        <dbReference type="ChEBI" id="CHEBI:49883"/>
    </cofactor>
    <text evidence="1">Binds 1 [4Fe-4S] cluster per heterodimer. The cluster is bound at the heterodimer interface by residues from both subunits.</text>
</comment>
<comment type="pathway">
    <text evidence="1">Porphyrin-containing compound metabolism; chlorophyll biosynthesis (light-independent).</text>
</comment>
<comment type="subunit">
    <text evidence="1">Protochlorophyllide reductase is composed of three subunits; ChlL, ChlN and ChlB. Forms a heterotetramer of two ChlB and two ChlN subunits.</text>
</comment>
<comment type="similarity">
    <text evidence="1">Belongs to the BchN/ChlN family.</text>
</comment>
<organism>
    <name type="scientific">Synechococcus sp. (strain CC9605)</name>
    <dbReference type="NCBI Taxonomy" id="110662"/>
    <lineage>
        <taxon>Bacteria</taxon>
        <taxon>Bacillati</taxon>
        <taxon>Cyanobacteriota</taxon>
        <taxon>Cyanophyceae</taxon>
        <taxon>Synechococcales</taxon>
        <taxon>Synechococcaceae</taxon>
        <taxon>Synechococcus</taxon>
    </lineage>
</organism>
<protein>
    <recommendedName>
        <fullName evidence="1">Light-independent protochlorophyllide reductase subunit N</fullName>
        <shortName evidence="1">DPOR subunit N</shortName>
        <shortName evidence="1">LI-POR subunit N</shortName>
        <ecNumber evidence="1">1.3.7.7</ecNumber>
    </recommendedName>
</protein>